<reference key="1">
    <citation type="journal article" date="2004" name="Nat. Genet.">
        <title>Complete sequencing and characterization of 21,243 full-length human cDNAs.</title>
        <authorList>
            <person name="Ota T."/>
            <person name="Suzuki Y."/>
            <person name="Nishikawa T."/>
            <person name="Otsuki T."/>
            <person name="Sugiyama T."/>
            <person name="Irie R."/>
            <person name="Wakamatsu A."/>
            <person name="Hayashi K."/>
            <person name="Sato H."/>
            <person name="Nagai K."/>
            <person name="Kimura K."/>
            <person name="Makita H."/>
            <person name="Sekine M."/>
            <person name="Obayashi M."/>
            <person name="Nishi T."/>
            <person name="Shibahara T."/>
            <person name="Tanaka T."/>
            <person name="Ishii S."/>
            <person name="Yamamoto J."/>
            <person name="Saito K."/>
            <person name="Kawai Y."/>
            <person name="Isono Y."/>
            <person name="Nakamura Y."/>
            <person name="Nagahari K."/>
            <person name="Murakami K."/>
            <person name="Yasuda T."/>
            <person name="Iwayanagi T."/>
            <person name="Wagatsuma M."/>
            <person name="Shiratori A."/>
            <person name="Sudo H."/>
            <person name="Hosoiri T."/>
            <person name="Kaku Y."/>
            <person name="Kodaira H."/>
            <person name="Kondo H."/>
            <person name="Sugawara M."/>
            <person name="Takahashi M."/>
            <person name="Kanda K."/>
            <person name="Yokoi T."/>
            <person name="Furuya T."/>
            <person name="Kikkawa E."/>
            <person name="Omura Y."/>
            <person name="Abe K."/>
            <person name="Kamihara K."/>
            <person name="Katsuta N."/>
            <person name="Sato K."/>
            <person name="Tanikawa M."/>
            <person name="Yamazaki M."/>
            <person name="Ninomiya K."/>
            <person name="Ishibashi T."/>
            <person name="Yamashita H."/>
            <person name="Murakawa K."/>
            <person name="Fujimori K."/>
            <person name="Tanai H."/>
            <person name="Kimata M."/>
            <person name="Watanabe M."/>
            <person name="Hiraoka S."/>
            <person name="Chiba Y."/>
            <person name="Ishida S."/>
            <person name="Ono Y."/>
            <person name="Takiguchi S."/>
            <person name="Watanabe S."/>
            <person name="Yosida M."/>
            <person name="Hotuta T."/>
            <person name="Kusano J."/>
            <person name="Kanehori K."/>
            <person name="Takahashi-Fujii A."/>
            <person name="Hara H."/>
            <person name="Tanase T.-O."/>
            <person name="Nomura Y."/>
            <person name="Togiya S."/>
            <person name="Komai F."/>
            <person name="Hara R."/>
            <person name="Takeuchi K."/>
            <person name="Arita M."/>
            <person name="Imose N."/>
            <person name="Musashino K."/>
            <person name="Yuuki H."/>
            <person name="Oshima A."/>
            <person name="Sasaki N."/>
            <person name="Aotsuka S."/>
            <person name="Yoshikawa Y."/>
            <person name="Matsunawa H."/>
            <person name="Ichihara T."/>
            <person name="Shiohata N."/>
            <person name="Sano S."/>
            <person name="Moriya S."/>
            <person name="Momiyama H."/>
            <person name="Satoh N."/>
            <person name="Takami S."/>
            <person name="Terashima Y."/>
            <person name="Suzuki O."/>
            <person name="Nakagawa S."/>
            <person name="Senoh A."/>
            <person name="Mizoguchi H."/>
            <person name="Goto Y."/>
            <person name="Shimizu F."/>
            <person name="Wakebe H."/>
            <person name="Hishigaki H."/>
            <person name="Watanabe T."/>
            <person name="Sugiyama A."/>
            <person name="Takemoto M."/>
            <person name="Kawakami B."/>
            <person name="Yamazaki M."/>
            <person name="Watanabe K."/>
            <person name="Kumagai A."/>
            <person name="Itakura S."/>
            <person name="Fukuzumi Y."/>
            <person name="Fujimori Y."/>
            <person name="Komiyama M."/>
            <person name="Tashiro H."/>
            <person name="Tanigami A."/>
            <person name="Fujiwara T."/>
            <person name="Ono T."/>
            <person name="Yamada K."/>
            <person name="Fujii Y."/>
            <person name="Ozaki K."/>
            <person name="Hirao M."/>
            <person name="Ohmori Y."/>
            <person name="Kawabata A."/>
            <person name="Hikiji T."/>
            <person name="Kobatake N."/>
            <person name="Inagaki H."/>
            <person name="Ikema Y."/>
            <person name="Okamoto S."/>
            <person name="Okitani R."/>
            <person name="Kawakami T."/>
            <person name="Noguchi S."/>
            <person name="Itoh T."/>
            <person name="Shigeta K."/>
            <person name="Senba T."/>
            <person name="Matsumura K."/>
            <person name="Nakajima Y."/>
            <person name="Mizuno T."/>
            <person name="Morinaga M."/>
            <person name="Sasaki M."/>
            <person name="Togashi T."/>
            <person name="Oyama M."/>
            <person name="Hata H."/>
            <person name="Watanabe M."/>
            <person name="Komatsu T."/>
            <person name="Mizushima-Sugano J."/>
            <person name="Satoh T."/>
            <person name="Shirai Y."/>
            <person name="Takahashi Y."/>
            <person name="Nakagawa K."/>
            <person name="Okumura K."/>
            <person name="Nagase T."/>
            <person name="Nomura N."/>
            <person name="Kikuchi H."/>
            <person name="Masuho Y."/>
            <person name="Yamashita R."/>
            <person name="Nakai K."/>
            <person name="Yada T."/>
            <person name="Nakamura Y."/>
            <person name="Ohara O."/>
            <person name="Isogai T."/>
            <person name="Sugano S."/>
        </authorList>
    </citation>
    <scope>NUCLEOTIDE SEQUENCE [LARGE SCALE MRNA] (ISOFORM 1)</scope>
    <source>
        <tissue>Lung</tissue>
    </source>
</reference>
<reference key="2">
    <citation type="journal article" date="2006" name="Nature">
        <title>The DNA sequence and biological annotation of human chromosome 1.</title>
        <authorList>
            <person name="Gregory S.G."/>
            <person name="Barlow K.F."/>
            <person name="McLay K.E."/>
            <person name="Kaul R."/>
            <person name="Swarbreck D."/>
            <person name="Dunham A."/>
            <person name="Scott C.E."/>
            <person name="Howe K.L."/>
            <person name="Woodfine K."/>
            <person name="Spencer C.C.A."/>
            <person name="Jones M.C."/>
            <person name="Gillson C."/>
            <person name="Searle S."/>
            <person name="Zhou Y."/>
            <person name="Kokocinski F."/>
            <person name="McDonald L."/>
            <person name="Evans R."/>
            <person name="Phillips K."/>
            <person name="Atkinson A."/>
            <person name="Cooper R."/>
            <person name="Jones C."/>
            <person name="Hall R.E."/>
            <person name="Andrews T.D."/>
            <person name="Lloyd C."/>
            <person name="Ainscough R."/>
            <person name="Almeida J.P."/>
            <person name="Ambrose K.D."/>
            <person name="Anderson F."/>
            <person name="Andrew R.W."/>
            <person name="Ashwell R.I.S."/>
            <person name="Aubin K."/>
            <person name="Babbage A.K."/>
            <person name="Bagguley C.L."/>
            <person name="Bailey J."/>
            <person name="Beasley H."/>
            <person name="Bethel G."/>
            <person name="Bird C.P."/>
            <person name="Bray-Allen S."/>
            <person name="Brown J.Y."/>
            <person name="Brown A.J."/>
            <person name="Buckley D."/>
            <person name="Burton J."/>
            <person name="Bye J."/>
            <person name="Carder C."/>
            <person name="Chapman J.C."/>
            <person name="Clark S.Y."/>
            <person name="Clarke G."/>
            <person name="Clee C."/>
            <person name="Cobley V."/>
            <person name="Collier R.E."/>
            <person name="Corby N."/>
            <person name="Coville G.J."/>
            <person name="Davies J."/>
            <person name="Deadman R."/>
            <person name="Dunn M."/>
            <person name="Earthrowl M."/>
            <person name="Ellington A.G."/>
            <person name="Errington H."/>
            <person name="Frankish A."/>
            <person name="Frankland J."/>
            <person name="French L."/>
            <person name="Garner P."/>
            <person name="Garnett J."/>
            <person name="Gay L."/>
            <person name="Ghori M.R.J."/>
            <person name="Gibson R."/>
            <person name="Gilby L.M."/>
            <person name="Gillett W."/>
            <person name="Glithero R.J."/>
            <person name="Grafham D.V."/>
            <person name="Griffiths C."/>
            <person name="Griffiths-Jones S."/>
            <person name="Grocock R."/>
            <person name="Hammond S."/>
            <person name="Harrison E.S.I."/>
            <person name="Hart E."/>
            <person name="Haugen E."/>
            <person name="Heath P.D."/>
            <person name="Holmes S."/>
            <person name="Holt K."/>
            <person name="Howden P.J."/>
            <person name="Hunt A.R."/>
            <person name="Hunt S.E."/>
            <person name="Hunter G."/>
            <person name="Isherwood J."/>
            <person name="James R."/>
            <person name="Johnson C."/>
            <person name="Johnson D."/>
            <person name="Joy A."/>
            <person name="Kay M."/>
            <person name="Kershaw J.K."/>
            <person name="Kibukawa M."/>
            <person name="Kimberley A.M."/>
            <person name="King A."/>
            <person name="Knights A.J."/>
            <person name="Lad H."/>
            <person name="Laird G."/>
            <person name="Lawlor S."/>
            <person name="Leongamornlert D.A."/>
            <person name="Lloyd D.M."/>
            <person name="Loveland J."/>
            <person name="Lovell J."/>
            <person name="Lush M.J."/>
            <person name="Lyne R."/>
            <person name="Martin S."/>
            <person name="Mashreghi-Mohammadi M."/>
            <person name="Matthews L."/>
            <person name="Matthews N.S.W."/>
            <person name="McLaren S."/>
            <person name="Milne S."/>
            <person name="Mistry S."/>
            <person name="Moore M.J.F."/>
            <person name="Nickerson T."/>
            <person name="O'Dell C.N."/>
            <person name="Oliver K."/>
            <person name="Palmeiri A."/>
            <person name="Palmer S.A."/>
            <person name="Parker A."/>
            <person name="Patel D."/>
            <person name="Pearce A.V."/>
            <person name="Peck A.I."/>
            <person name="Pelan S."/>
            <person name="Phelps K."/>
            <person name="Phillimore B.J."/>
            <person name="Plumb R."/>
            <person name="Rajan J."/>
            <person name="Raymond C."/>
            <person name="Rouse G."/>
            <person name="Saenphimmachak C."/>
            <person name="Sehra H.K."/>
            <person name="Sheridan E."/>
            <person name="Shownkeen R."/>
            <person name="Sims S."/>
            <person name="Skuce C.D."/>
            <person name="Smith M."/>
            <person name="Steward C."/>
            <person name="Subramanian S."/>
            <person name="Sycamore N."/>
            <person name="Tracey A."/>
            <person name="Tromans A."/>
            <person name="Van Helmond Z."/>
            <person name="Wall M."/>
            <person name="Wallis J.M."/>
            <person name="White S."/>
            <person name="Whitehead S.L."/>
            <person name="Wilkinson J.E."/>
            <person name="Willey D.L."/>
            <person name="Williams H."/>
            <person name="Wilming L."/>
            <person name="Wray P.W."/>
            <person name="Wu Z."/>
            <person name="Coulson A."/>
            <person name="Vaudin M."/>
            <person name="Sulston J.E."/>
            <person name="Durbin R.M."/>
            <person name="Hubbard T."/>
            <person name="Wooster R."/>
            <person name="Dunham I."/>
            <person name="Carter N.P."/>
            <person name="McVean G."/>
            <person name="Ross M.T."/>
            <person name="Harrow J."/>
            <person name="Olson M.V."/>
            <person name="Beck S."/>
            <person name="Rogers J."/>
            <person name="Bentley D.R."/>
        </authorList>
    </citation>
    <scope>NUCLEOTIDE SEQUENCE [LARGE SCALE GENOMIC DNA]</scope>
</reference>
<reference key="3">
    <citation type="journal article" date="2004" name="Genome Res.">
        <title>The status, quality, and expansion of the NIH full-length cDNA project: the Mammalian Gene Collection (MGC).</title>
        <authorList>
            <consortium name="The MGC Project Team"/>
        </authorList>
    </citation>
    <scope>NUCLEOTIDE SEQUENCE [LARGE SCALE MRNA] OF 1-524</scope>
</reference>
<comment type="alternative products">
    <event type="alternative splicing"/>
    <isoform>
        <id>Q5TGP6-1</id>
        <name>1</name>
        <sequence type="displayed"/>
    </isoform>
    <isoform>
        <id>Q5TGP6-2</id>
        <name>2</name>
        <sequence type="described" ref="VSP_047654"/>
    </isoform>
</comment>
<comment type="sequence caution" evidence="1">
    <conflict type="frameshift">
        <sequence resource="EMBL-CDS" id="BAB15690"/>
    </conflict>
</comment>
<protein>
    <recommendedName>
        <fullName>Maestro heat-like repeat-containing protein family member 9</fullName>
    </recommendedName>
</protein>
<feature type="chain" id="PRO_0000285028" description="Maestro heat-like repeat-containing protein family member 9">
    <location>
        <begin position="1"/>
        <end position="573"/>
    </location>
</feature>
<feature type="repeat" description="HEAT 1">
    <location>
        <begin position="118"/>
        <end position="155"/>
    </location>
</feature>
<feature type="repeat" description="HEAT 2">
    <location>
        <begin position="252"/>
        <end position="289"/>
    </location>
</feature>
<feature type="repeat" description="HEAT 3">
    <location>
        <begin position="292"/>
        <end position="328"/>
    </location>
</feature>
<feature type="repeat" description="HEAT 4">
    <location>
        <begin position="357"/>
        <end position="394"/>
    </location>
</feature>
<feature type="repeat" description="HEAT 5">
    <location>
        <begin position="418"/>
        <end position="458"/>
    </location>
</feature>
<feature type="splice variant" id="VSP_047654" description="In isoform 2." evidence="1">
    <original>VSFVDCEQLCSHFLFLPKFKSKFQFLVSLPLNVGSYQDLRS</original>
    <variation>LLNNFFKDPLPEEFLVLFINWINDSNPVVSRLILHRIVHMSPIINKTENVSSILIAILDAFLSKDDNVVLQALLTLRRLLNELDKVTYSLGTRIGSSYCTLMDHINGGIRSMAIRHFGQLVRDMRQYTWMVNDVVLEGLVPLILFLEDDDKRVAEACKYTLKICTSQLKWSTSRLLKDENYSFEMVVLNICNNLIISHRNYITDLTSDTLRFLWSPRTYLKRASVILIGYLAKSGGHLLLRDEIEVMLDVIERLLRDEDPMIKQLAEITYDIFKKKAHKLTSAPLKQNFQKLLKLFYIKKLKPLYNYNSPNGQIDSPTDSKDVKNDKAL</variation>
    <location>
        <begin position="533"/>
        <end position="573"/>
    </location>
</feature>
<feature type="sequence variant" id="VAR_031903" description="In dbSNP:rs17563089.">
    <original>N</original>
    <variation>S</variation>
    <location>
        <position position="29"/>
    </location>
</feature>
<feature type="sequence variant" id="VAR_031904" description="In dbSNP:rs2294740.">
    <original>V</original>
    <variation>A</variation>
    <location>
        <position position="74"/>
    </location>
</feature>
<feature type="sequence variant" id="VAR_031905" description="In dbSNP:rs16863872.">
    <original>Y</original>
    <variation>H</variation>
    <location>
        <position position="160"/>
    </location>
</feature>
<feature type="sequence conflict" description="In Ref. 1; BAB15690." evidence="1" ref="1">
    <original>I</original>
    <variation>L</variation>
    <location>
        <position position="161"/>
    </location>
</feature>
<name>MROH9_HUMAN</name>
<gene>
    <name type="primary">MROH9</name>
    <name type="synonym">C1orf129</name>
</gene>
<dbReference type="EMBL" id="AK027203">
    <property type="protein sequence ID" value="BAB15690.1"/>
    <property type="status" value="ALT_FRAME"/>
    <property type="molecule type" value="mRNA"/>
</dbReference>
<dbReference type="EMBL" id="AL031965">
    <property type="status" value="NOT_ANNOTATED_CDS"/>
    <property type="molecule type" value="Genomic_DNA"/>
</dbReference>
<dbReference type="EMBL" id="BX284613">
    <property type="status" value="NOT_ANNOTATED_CDS"/>
    <property type="molecule type" value="Genomic_DNA"/>
</dbReference>
<dbReference type="EMBL" id="BC113390">
    <property type="protein sequence ID" value="AAI13391.1"/>
    <property type="molecule type" value="mRNA"/>
</dbReference>
<dbReference type="EMBL" id="BC113392">
    <property type="protein sequence ID" value="AAI13393.1"/>
    <property type="molecule type" value="mRNA"/>
</dbReference>
<dbReference type="CCDS" id="CCDS41436.1">
    <molecule id="Q5TGP6-1"/>
</dbReference>
<dbReference type="CCDS" id="CCDS53429.1">
    <molecule id="Q5TGP6-2"/>
</dbReference>
<dbReference type="RefSeq" id="NP_001157101.1">
    <molecule id="Q5TGP6-2"/>
    <property type="nucleotide sequence ID" value="NM_001163629.2"/>
</dbReference>
<dbReference type="RefSeq" id="NP_079339.2">
    <molecule id="Q5TGP6-1"/>
    <property type="nucleotide sequence ID" value="NM_025063.4"/>
</dbReference>
<dbReference type="BioGRID" id="123132">
    <property type="interactions" value="3"/>
</dbReference>
<dbReference type="FunCoup" id="Q5TGP6">
    <property type="interactions" value="1"/>
</dbReference>
<dbReference type="IntAct" id="Q5TGP6">
    <property type="interactions" value="1"/>
</dbReference>
<dbReference type="STRING" id="9606.ENSP00000356733"/>
<dbReference type="GlyGen" id="Q5TGP6">
    <property type="glycosylation" value="1 site, 1 O-linked glycan (1 site)"/>
</dbReference>
<dbReference type="iPTMnet" id="Q5TGP6"/>
<dbReference type="PhosphoSitePlus" id="Q5TGP6"/>
<dbReference type="BioMuta" id="MROH9"/>
<dbReference type="DMDM" id="74746511"/>
<dbReference type="jPOST" id="Q5TGP6"/>
<dbReference type="MassIVE" id="Q5TGP6"/>
<dbReference type="PaxDb" id="9606-ENSP00000356733"/>
<dbReference type="PeptideAtlas" id="Q5TGP6"/>
<dbReference type="ProteomicsDB" id="24250"/>
<dbReference type="ProteomicsDB" id="65127">
    <molecule id="Q5TGP6-1"/>
</dbReference>
<dbReference type="Antibodypedia" id="34373">
    <property type="antibodies" value="52 antibodies from 8 providers"/>
</dbReference>
<dbReference type="DNASU" id="80133"/>
<dbReference type="Ensembl" id="ENST00000367758.7">
    <molecule id="Q5TGP6-1"/>
    <property type="protein sequence ID" value="ENSP00000356732.3"/>
    <property type="gene ID" value="ENSG00000117501.15"/>
</dbReference>
<dbReference type="Ensembl" id="ENST00000367759.9">
    <molecule id="Q5TGP6-2"/>
    <property type="protein sequence ID" value="ENSP00000356733.4"/>
    <property type="gene ID" value="ENSG00000117501.15"/>
</dbReference>
<dbReference type="GeneID" id="80133"/>
<dbReference type="KEGG" id="hsa:80133"/>
<dbReference type="MANE-Select" id="ENST00000367759.9">
    <molecule id="Q5TGP6-2"/>
    <property type="protein sequence ID" value="ENSP00000356733.4"/>
    <property type="RefSeq nucleotide sequence ID" value="NM_001163629.2"/>
    <property type="RefSeq protein sequence ID" value="NP_001157101.1"/>
</dbReference>
<dbReference type="UCSC" id="uc001ghg.4">
    <molecule id="Q5TGP6-1"/>
    <property type="organism name" value="human"/>
</dbReference>
<dbReference type="AGR" id="HGNC:26287"/>
<dbReference type="CTD" id="80133"/>
<dbReference type="DisGeNET" id="80133"/>
<dbReference type="GeneCards" id="MROH9"/>
<dbReference type="HGNC" id="HGNC:26287">
    <property type="gene designation" value="MROH9"/>
</dbReference>
<dbReference type="HPA" id="ENSG00000117501">
    <property type="expression patterns" value="Tissue enhanced (fallopian tube, testis)"/>
</dbReference>
<dbReference type="neXtProt" id="NX_Q5TGP6"/>
<dbReference type="OpenTargets" id="ENSG00000117501"/>
<dbReference type="PharmGKB" id="PA142672447"/>
<dbReference type="VEuPathDB" id="HostDB:ENSG00000117501"/>
<dbReference type="eggNOG" id="KOG2032">
    <property type="taxonomic scope" value="Eukaryota"/>
</dbReference>
<dbReference type="GeneTree" id="ENSGT00940000162280"/>
<dbReference type="HOGENOM" id="CLU_362444_0_0_1"/>
<dbReference type="InParanoid" id="Q5TGP6"/>
<dbReference type="OMA" id="IRSMAIQ"/>
<dbReference type="OrthoDB" id="9448565at2759"/>
<dbReference type="PAN-GO" id="Q5TGP6">
    <property type="GO annotations" value="1 GO annotation based on evolutionary models"/>
</dbReference>
<dbReference type="PhylomeDB" id="Q5TGP6"/>
<dbReference type="TreeFam" id="TF337192"/>
<dbReference type="PathwayCommons" id="Q5TGP6"/>
<dbReference type="BioGRID-ORCS" id="80133">
    <property type="hits" value="14 hits in 1142 CRISPR screens"/>
</dbReference>
<dbReference type="GenomeRNAi" id="80133"/>
<dbReference type="Pharos" id="Q5TGP6">
    <property type="development level" value="Tdark"/>
</dbReference>
<dbReference type="PRO" id="PR:Q5TGP6"/>
<dbReference type="Proteomes" id="UP000005640">
    <property type="component" value="Chromosome 1"/>
</dbReference>
<dbReference type="RNAct" id="Q5TGP6">
    <property type="molecule type" value="protein"/>
</dbReference>
<dbReference type="Bgee" id="ENSG00000117501">
    <property type="expression patterns" value="Expressed in male germ line stem cell (sensu Vertebrata) in testis and 36 other cell types or tissues"/>
</dbReference>
<dbReference type="ExpressionAtlas" id="Q5TGP6">
    <property type="expression patterns" value="baseline and differential"/>
</dbReference>
<dbReference type="InterPro" id="IPR016024">
    <property type="entry name" value="ARM-type_fold"/>
</dbReference>
<dbReference type="InterPro" id="IPR048465">
    <property type="entry name" value="Maestro-like_HEAT"/>
</dbReference>
<dbReference type="InterPro" id="IPR045206">
    <property type="entry name" value="Maestro_heat-like_prot"/>
</dbReference>
<dbReference type="PANTHER" id="PTHR23120:SF5">
    <property type="entry name" value="MAESTRO HEAT-LIKE REPEAT FAMILY MEMBER 9"/>
    <property type="match status" value="1"/>
</dbReference>
<dbReference type="PANTHER" id="PTHR23120">
    <property type="entry name" value="MAESTRO-RELATED HEAT DOMAIN-CONTAINING"/>
    <property type="match status" value="1"/>
</dbReference>
<dbReference type="Pfam" id="PF21047">
    <property type="entry name" value="HEAT_Maestro"/>
    <property type="match status" value="1"/>
</dbReference>
<dbReference type="SUPFAM" id="SSF48371">
    <property type="entry name" value="ARM repeat"/>
    <property type="match status" value="1"/>
</dbReference>
<sequence length="573" mass="65050">MLTRNPKTKSSLQILQDSVKWHHMAHKVNSLLDAYSGLLSNESMILAVNSSFVDPLLQFESQLKIIESSFGMLVVMPSLDKVKEMGSSYEYIEDMENLYHNILNIYENILTSLVSKDLYKLQILKEMLVWMSKDSSYLQERIMVIINKVLRFTVTKVRKYISVDAPCLGLLAAELSLLCSHEDPSIVKQASLGMCHLLYIARCQNDIGTNKPTNGKSHSLQFPSSDVEFLPKEFQQDESKIAQRVGQTLLPPLLTDFVQSLLMKLSSPDDKIASDAASILIFTLEFHAEKVTMVSKIVDAIYRQLCDNNCMKDVMLQVITLLTCTSPKKVIFQLMDYPVPADDTLIQMWKAACSQASVAPHVLKTILLILKGKPGEMEDTVTEGKRFSLDITNLMPLAACQALCTFLPLGSYRKAVAQYFPQLLTTLMFQVFYNSELKPILKDRALYAQDALRVLLNCSGLQQVDITLMKENFWDQLSEDLCYYHGVCFIAKTLSEYNFPQFPETLSYLYKLSVEGPRRSEDTVIVLIFLTEVSFVDCEQLCSHFLFLPKFKSKFQFLVSLPLNVGSYQDLRS</sequence>
<proteinExistence type="evidence at protein level"/>
<accession>Q5TGP6</accession>
<accession>A0PJM0</accession>
<accession>A0PJM2</accession>
<accession>F5GWX6</accession>
<accession>Q9H5D7</accession>
<keyword id="KW-0025">Alternative splicing</keyword>
<keyword id="KW-1267">Proteomics identification</keyword>
<keyword id="KW-1185">Reference proteome</keyword>
<keyword id="KW-0677">Repeat</keyword>
<evidence type="ECO:0000305" key="1"/>
<organism>
    <name type="scientific">Homo sapiens</name>
    <name type="common">Human</name>
    <dbReference type="NCBI Taxonomy" id="9606"/>
    <lineage>
        <taxon>Eukaryota</taxon>
        <taxon>Metazoa</taxon>
        <taxon>Chordata</taxon>
        <taxon>Craniata</taxon>
        <taxon>Vertebrata</taxon>
        <taxon>Euteleostomi</taxon>
        <taxon>Mammalia</taxon>
        <taxon>Eutheria</taxon>
        <taxon>Euarchontoglires</taxon>
        <taxon>Primates</taxon>
        <taxon>Haplorrhini</taxon>
        <taxon>Catarrhini</taxon>
        <taxon>Hominidae</taxon>
        <taxon>Homo</taxon>
    </lineage>
</organism>